<evidence type="ECO:0000255" key="1">
    <source>
        <dbReference type="HAMAP-Rule" id="MF_01017"/>
    </source>
</evidence>
<comment type="catalytic activity">
    <reaction evidence="1">
        <text>a quinone + NADH + H(+) = a quinol + NAD(+)</text>
        <dbReference type="Rhea" id="RHEA:46160"/>
        <dbReference type="ChEBI" id="CHEBI:15378"/>
        <dbReference type="ChEBI" id="CHEBI:24646"/>
        <dbReference type="ChEBI" id="CHEBI:57540"/>
        <dbReference type="ChEBI" id="CHEBI:57945"/>
        <dbReference type="ChEBI" id="CHEBI:132124"/>
        <dbReference type="EC" id="1.6.5.2"/>
    </reaction>
</comment>
<comment type="catalytic activity">
    <reaction evidence="1">
        <text>a quinone + NADPH + H(+) = a quinol + NADP(+)</text>
        <dbReference type="Rhea" id="RHEA:46164"/>
        <dbReference type="ChEBI" id="CHEBI:15378"/>
        <dbReference type="ChEBI" id="CHEBI:24646"/>
        <dbReference type="ChEBI" id="CHEBI:57783"/>
        <dbReference type="ChEBI" id="CHEBI:58349"/>
        <dbReference type="ChEBI" id="CHEBI:132124"/>
        <dbReference type="EC" id="1.6.5.2"/>
    </reaction>
</comment>
<comment type="cofactor">
    <cofactor evidence="1">
        <name>FMN</name>
        <dbReference type="ChEBI" id="CHEBI:58210"/>
    </cofactor>
    <text evidence="1">Binds 1 FMN per monomer.</text>
</comment>
<comment type="similarity">
    <text evidence="1">Belongs to the WrbA family.</text>
</comment>
<reference key="1">
    <citation type="submission" date="2008-05" db="EMBL/GenBank/DDBJ databases">
        <title>Complete sequence of Rhodopseudomonas palustris TIE-1.</title>
        <authorList>
            <consortium name="US DOE Joint Genome Institute"/>
            <person name="Lucas S."/>
            <person name="Copeland A."/>
            <person name="Lapidus A."/>
            <person name="Glavina del Rio T."/>
            <person name="Dalin E."/>
            <person name="Tice H."/>
            <person name="Pitluck S."/>
            <person name="Chain P."/>
            <person name="Malfatti S."/>
            <person name="Shin M."/>
            <person name="Vergez L."/>
            <person name="Lang D."/>
            <person name="Schmutz J."/>
            <person name="Larimer F."/>
            <person name="Land M."/>
            <person name="Hauser L."/>
            <person name="Kyrpides N."/>
            <person name="Mikhailova N."/>
            <person name="Emerson D."/>
            <person name="Newman D.K."/>
            <person name="Roden E."/>
            <person name="Richardson P."/>
        </authorList>
    </citation>
    <scope>NUCLEOTIDE SEQUENCE [LARGE SCALE GENOMIC DNA]</scope>
    <source>
        <strain>TIE-1</strain>
    </source>
</reference>
<sequence length="199" mass="20820">MAKVLVLYYSAYGHIEAMANAVAEGAREAGAQVDIKRVPELVPPDVAKASHYKLDQAAPVATIEDLANYDAIVIGTGTRFGRMASQMSNFLDQAGGLWARGALNGKVGGAFTSTATQHGGQETTLFSIITNLLHFGMVVVGLNYGFGDQMRLDQVTGGAPYGATTITGGDGSRQPSETELAGARYQGKTIAETAIKLHG</sequence>
<protein>
    <recommendedName>
        <fullName evidence="1">NAD(P)H dehydrogenase (quinone)</fullName>
        <ecNumber evidence="1">1.6.5.2</ecNumber>
    </recommendedName>
    <alternativeName>
        <fullName>Flavoprotein WrbA</fullName>
    </alternativeName>
    <alternativeName>
        <fullName evidence="1">NAD(P)H:quinone oxidoreductase</fullName>
        <shortName evidence="1">NQO</shortName>
    </alternativeName>
</protein>
<proteinExistence type="inferred from homology"/>
<organism>
    <name type="scientific">Rhodopseudomonas palustris (strain TIE-1)</name>
    <dbReference type="NCBI Taxonomy" id="395960"/>
    <lineage>
        <taxon>Bacteria</taxon>
        <taxon>Pseudomonadati</taxon>
        <taxon>Pseudomonadota</taxon>
        <taxon>Alphaproteobacteria</taxon>
        <taxon>Hyphomicrobiales</taxon>
        <taxon>Nitrobacteraceae</taxon>
        <taxon>Rhodopseudomonas</taxon>
    </lineage>
</organism>
<name>NQOR_RHOPT</name>
<accession>B3QFA1</accession>
<feature type="chain" id="PRO_1000200638" description="NAD(P)H dehydrogenase (quinone)">
    <location>
        <begin position="1"/>
        <end position="199"/>
    </location>
</feature>
<feature type="domain" description="Flavodoxin-like" evidence="1">
    <location>
        <begin position="4"/>
        <end position="190"/>
    </location>
</feature>
<feature type="binding site" evidence="1">
    <location>
        <begin position="10"/>
        <end position="15"/>
    </location>
    <ligand>
        <name>FMN</name>
        <dbReference type="ChEBI" id="CHEBI:58210"/>
    </ligand>
</feature>
<feature type="binding site" evidence="1">
    <location>
        <position position="12"/>
    </location>
    <ligand>
        <name>NAD(+)</name>
        <dbReference type="ChEBI" id="CHEBI:57540"/>
    </ligand>
</feature>
<feature type="binding site" evidence="1">
    <location>
        <begin position="78"/>
        <end position="80"/>
    </location>
    <ligand>
        <name>FMN</name>
        <dbReference type="ChEBI" id="CHEBI:58210"/>
    </ligand>
</feature>
<feature type="binding site" evidence="1">
    <location>
        <position position="98"/>
    </location>
    <ligand>
        <name>substrate</name>
    </ligand>
</feature>
<feature type="binding site" evidence="1">
    <location>
        <begin position="113"/>
        <end position="119"/>
    </location>
    <ligand>
        <name>FMN</name>
        <dbReference type="ChEBI" id="CHEBI:58210"/>
    </ligand>
</feature>
<feature type="binding site" evidence="1">
    <location>
        <position position="134"/>
    </location>
    <ligand>
        <name>FMN</name>
        <dbReference type="ChEBI" id="CHEBI:58210"/>
    </ligand>
</feature>
<dbReference type="EC" id="1.6.5.2" evidence="1"/>
<dbReference type="EMBL" id="CP001096">
    <property type="protein sequence ID" value="ACE99535.1"/>
    <property type="molecule type" value="Genomic_DNA"/>
</dbReference>
<dbReference type="SMR" id="B3QFA1"/>
<dbReference type="CAZy" id="AA6">
    <property type="family name" value="Auxiliary Activities 6"/>
</dbReference>
<dbReference type="KEGG" id="rpt:Rpal_0979"/>
<dbReference type="HOGENOM" id="CLU_051402_0_2_5"/>
<dbReference type="OrthoDB" id="9801479at2"/>
<dbReference type="Proteomes" id="UP000001725">
    <property type="component" value="Chromosome"/>
</dbReference>
<dbReference type="GO" id="GO:0016020">
    <property type="term" value="C:membrane"/>
    <property type="evidence" value="ECO:0007669"/>
    <property type="project" value="TreeGrafter"/>
</dbReference>
<dbReference type="GO" id="GO:0050660">
    <property type="term" value="F:flavin adenine dinucleotide binding"/>
    <property type="evidence" value="ECO:0007669"/>
    <property type="project" value="UniProtKB-UniRule"/>
</dbReference>
<dbReference type="GO" id="GO:0010181">
    <property type="term" value="F:FMN binding"/>
    <property type="evidence" value="ECO:0007669"/>
    <property type="project" value="InterPro"/>
</dbReference>
<dbReference type="GO" id="GO:0051287">
    <property type="term" value="F:NAD binding"/>
    <property type="evidence" value="ECO:0007669"/>
    <property type="project" value="UniProtKB-UniRule"/>
</dbReference>
<dbReference type="GO" id="GO:0050136">
    <property type="term" value="F:NADH:ubiquinone reductase (non-electrogenic) activity"/>
    <property type="evidence" value="ECO:0007669"/>
    <property type="project" value="RHEA"/>
</dbReference>
<dbReference type="GO" id="GO:0050661">
    <property type="term" value="F:NADP binding"/>
    <property type="evidence" value="ECO:0007669"/>
    <property type="project" value="UniProtKB-UniRule"/>
</dbReference>
<dbReference type="GO" id="GO:0008753">
    <property type="term" value="F:NADPH dehydrogenase (quinone) activity"/>
    <property type="evidence" value="ECO:0007669"/>
    <property type="project" value="RHEA"/>
</dbReference>
<dbReference type="FunFam" id="3.40.50.360:FF:000001">
    <property type="entry name" value="NAD(P)H dehydrogenase (Quinone) FQR1-like"/>
    <property type="match status" value="1"/>
</dbReference>
<dbReference type="Gene3D" id="3.40.50.360">
    <property type="match status" value="1"/>
</dbReference>
<dbReference type="HAMAP" id="MF_01017">
    <property type="entry name" value="NQOR"/>
    <property type="match status" value="1"/>
</dbReference>
<dbReference type="InterPro" id="IPR008254">
    <property type="entry name" value="Flavodoxin/NO_synth"/>
</dbReference>
<dbReference type="InterPro" id="IPR029039">
    <property type="entry name" value="Flavoprotein-like_sf"/>
</dbReference>
<dbReference type="InterPro" id="IPR010089">
    <property type="entry name" value="Flavoprotein_WrbA-like"/>
</dbReference>
<dbReference type="InterPro" id="IPR005025">
    <property type="entry name" value="FMN_Rdtase-like_dom"/>
</dbReference>
<dbReference type="InterPro" id="IPR037513">
    <property type="entry name" value="NQO"/>
</dbReference>
<dbReference type="NCBIfam" id="TIGR01755">
    <property type="entry name" value="flav_wrbA"/>
    <property type="match status" value="1"/>
</dbReference>
<dbReference type="NCBIfam" id="NF002999">
    <property type="entry name" value="PRK03767.1"/>
    <property type="match status" value="1"/>
</dbReference>
<dbReference type="PANTHER" id="PTHR30546">
    <property type="entry name" value="FLAVODOXIN-RELATED PROTEIN WRBA-RELATED"/>
    <property type="match status" value="1"/>
</dbReference>
<dbReference type="PANTHER" id="PTHR30546:SF23">
    <property type="entry name" value="FLAVOPROTEIN-LIKE PROTEIN YCP4-RELATED"/>
    <property type="match status" value="1"/>
</dbReference>
<dbReference type="Pfam" id="PF03358">
    <property type="entry name" value="FMN_red"/>
    <property type="match status" value="1"/>
</dbReference>
<dbReference type="SUPFAM" id="SSF52218">
    <property type="entry name" value="Flavoproteins"/>
    <property type="match status" value="1"/>
</dbReference>
<dbReference type="PROSITE" id="PS50902">
    <property type="entry name" value="FLAVODOXIN_LIKE"/>
    <property type="match status" value="1"/>
</dbReference>
<keyword id="KW-0285">Flavoprotein</keyword>
<keyword id="KW-0288">FMN</keyword>
<keyword id="KW-0520">NAD</keyword>
<keyword id="KW-0521">NADP</keyword>
<keyword id="KW-0547">Nucleotide-binding</keyword>
<keyword id="KW-0560">Oxidoreductase</keyword>
<gene>
    <name type="ordered locus">Rpal_0979</name>
</gene>